<keyword id="KW-0963">Cytoplasm</keyword>
<keyword id="KW-0671">Queuosine biosynthesis</keyword>
<keyword id="KW-1185">Reference proteome</keyword>
<keyword id="KW-0949">S-adenosyl-L-methionine</keyword>
<keyword id="KW-0808">Transferase</keyword>
<reference key="1">
    <citation type="journal article" date="2011" name="J. Bacteriol.">
        <title>Genome of Ochrobactrum anthropi ATCC 49188 T, a versatile opportunistic pathogen and symbiont of several eukaryotic hosts.</title>
        <authorList>
            <person name="Chain P.S."/>
            <person name="Lang D.M."/>
            <person name="Comerci D.J."/>
            <person name="Malfatti S.A."/>
            <person name="Vergez L.M."/>
            <person name="Shin M."/>
            <person name="Ugalde R.A."/>
            <person name="Garcia E."/>
            <person name="Tolmasky M.E."/>
        </authorList>
    </citation>
    <scope>NUCLEOTIDE SEQUENCE [LARGE SCALE GENOMIC DNA]</scope>
    <source>
        <strain>ATCC 49188 / DSM 6882 / CCUG 24695 / JCM 21032 / LMG 3331 / NBRC 15819 / NCTC 12168 / Alc 37</strain>
    </source>
</reference>
<feature type="chain" id="PRO_1000015240" description="S-adenosylmethionine:tRNA ribosyltransferase-isomerase">
    <location>
        <begin position="1"/>
        <end position="363"/>
    </location>
</feature>
<gene>
    <name evidence="1" type="primary">queA</name>
    <name type="ordered locus">Oant_2177</name>
</gene>
<protein>
    <recommendedName>
        <fullName evidence="1">S-adenosylmethionine:tRNA ribosyltransferase-isomerase</fullName>
        <ecNumber evidence="1">2.4.99.17</ecNumber>
    </recommendedName>
    <alternativeName>
        <fullName evidence="1">Queuosine biosynthesis protein QueA</fullName>
    </alternativeName>
</protein>
<sequence>MRVDLFDFDLPEESIALRPAEPRDHARLLRVRPGQPFEDRQVFELPDLLQPGDALVFNDTKVIPAQLEGMRERDGNISQVSATLHMRTGPDRWKAFLRPGKRVKEGDRIRFGHSGSSCFLGTLDATVAEKGDAGEALLVFDLSGAMLDEAIASVGHIPLPPYIASKRAEDERDRKDYQTVYAREEGAVAAPTAGLHFTPDLLEKIKAKGVEEHFVTLHVGAGTFLPVKADDTTDHKMHSEIGYVSQRTADALNAVHERGGKIICVGTTSLRLIESAAGEDGIIRPWAGATDIFITPGYKFRAVDLLMTNFHLPRSTLFMLVSAFSGFETMHAAYEHAISNGYRFYSYGDASLLERADKAKDTA</sequence>
<proteinExistence type="inferred from homology"/>
<dbReference type="EC" id="2.4.99.17" evidence="1"/>
<dbReference type="EMBL" id="CP000758">
    <property type="protein sequence ID" value="ABS14893.1"/>
    <property type="molecule type" value="Genomic_DNA"/>
</dbReference>
<dbReference type="RefSeq" id="WP_012092068.1">
    <property type="nucleotide sequence ID" value="NC_009667.1"/>
</dbReference>
<dbReference type="SMR" id="A6X0Y9"/>
<dbReference type="STRING" id="439375.Oant_2177"/>
<dbReference type="KEGG" id="oan:Oant_2177"/>
<dbReference type="PATRIC" id="fig|439375.7.peg.2287"/>
<dbReference type="eggNOG" id="COG0809">
    <property type="taxonomic scope" value="Bacteria"/>
</dbReference>
<dbReference type="HOGENOM" id="CLU_039110_1_1_5"/>
<dbReference type="UniPathway" id="UPA00392"/>
<dbReference type="Proteomes" id="UP000002301">
    <property type="component" value="Chromosome 1"/>
</dbReference>
<dbReference type="GO" id="GO:0005737">
    <property type="term" value="C:cytoplasm"/>
    <property type="evidence" value="ECO:0007669"/>
    <property type="project" value="UniProtKB-SubCell"/>
</dbReference>
<dbReference type="GO" id="GO:0051075">
    <property type="term" value="F:S-adenosylmethionine:tRNA ribosyltransferase-isomerase activity"/>
    <property type="evidence" value="ECO:0007669"/>
    <property type="project" value="UniProtKB-EC"/>
</dbReference>
<dbReference type="GO" id="GO:0008616">
    <property type="term" value="P:queuosine biosynthetic process"/>
    <property type="evidence" value="ECO:0007669"/>
    <property type="project" value="UniProtKB-UniRule"/>
</dbReference>
<dbReference type="GO" id="GO:0002099">
    <property type="term" value="P:tRNA wobble guanine modification"/>
    <property type="evidence" value="ECO:0007669"/>
    <property type="project" value="TreeGrafter"/>
</dbReference>
<dbReference type="FunFam" id="3.40.1780.10:FF:000001">
    <property type="entry name" value="S-adenosylmethionine:tRNA ribosyltransferase-isomerase"/>
    <property type="match status" value="1"/>
</dbReference>
<dbReference type="Gene3D" id="2.40.10.240">
    <property type="entry name" value="QueA-like"/>
    <property type="match status" value="1"/>
</dbReference>
<dbReference type="Gene3D" id="3.40.1780.10">
    <property type="entry name" value="QueA-like"/>
    <property type="match status" value="1"/>
</dbReference>
<dbReference type="HAMAP" id="MF_00113">
    <property type="entry name" value="QueA"/>
    <property type="match status" value="1"/>
</dbReference>
<dbReference type="InterPro" id="IPR003699">
    <property type="entry name" value="QueA"/>
</dbReference>
<dbReference type="InterPro" id="IPR042118">
    <property type="entry name" value="QueA_dom1"/>
</dbReference>
<dbReference type="InterPro" id="IPR042119">
    <property type="entry name" value="QueA_dom2"/>
</dbReference>
<dbReference type="InterPro" id="IPR036100">
    <property type="entry name" value="QueA_sf"/>
</dbReference>
<dbReference type="NCBIfam" id="NF001140">
    <property type="entry name" value="PRK00147.1"/>
    <property type="match status" value="1"/>
</dbReference>
<dbReference type="NCBIfam" id="TIGR00113">
    <property type="entry name" value="queA"/>
    <property type="match status" value="1"/>
</dbReference>
<dbReference type="PANTHER" id="PTHR30307">
    <property type="entry name" value="S-ADENOSYLMETHIONINE:TRNA RIBOSYLTRANSFERASE-ISOMERASE"/>
    <property type="match status" value="1"/>
</dbReference>
<dbReference type="PANTHER" id="PTHR30307:SF0">
    <property type="entry name" value="S-ADENOSYLMETHIONINE:TRNA RIBOSYLTRANSFERASE-ISOMERASE"/>
    <property type="match status" value="1"/>
</dbReference>
<dbReference type="Pfam" id="PF02547">
    <property type="entry name" value="Queuosine_synth"/>
    <property type="match status" value="1"/>
</dbReference>
<dbReference type="SUPFAM" id="SSF111337">
    <property type="entry name" value="QueA-like"/>
    <property type="match status" value="1"/>
</dbReference>
<name>QUEA_BRUA4</name>
<accession>A6X0Y9</accession>
<organism>
    <name type="scientific">Brucella anthropi (strain ATCC 49188 / DSM 6882 / CCUG 24695 / JCM 21032 / LMG 3331 / NBRC 15819 / NCTC 12168 / Alc 37)</name>
    <name type="common">Ochrobactrum anthropi</name>
    <dbReference type="NCBI Taxonomy" id="439375"/>
    <lineage>
        <taxon>Bacteria</taxon>
        <taxon>Pseudomonadati</taxon>
        <taxon>Pseudomonadota</taxon>
        <taxon>Alphaproteobacteria</taxon>
        <taxon>Hyphomicrobiales</taxon>
        <taxon>Brucellaceae</taxon>
        <taxon>Brucella/Ochrobactrum group</taxon>
        <taxon>Brucella</taxon>
    </lineage>
</organism>
<comment type="function">
    <text evidence="1">Transfers and isomerizes the ribose moiety from AdoMet to the 7-aminomethyl group of 7-deazaguanine (preQ1-tRNA) to give epoxyqueuosine (oQ-tRNA).</text>
</comment>
<comment type="catalytic activity">
    <reaction evidence="1">
        <text>7-aminomethyl-7-carbaguanosine(34) in tRNA + S-adenosyl-L-methionine = epoxyqueuosine(34) in tRNA + adenine + L-methionine + 2 H(+)</text>
        <dbReference type="Rhea" id="RHEA:32155"/>
        <dbReference type="Rhea" id="RHEA-COMP:10342"/>
        <dbReference type="Rhea" id="RHEA-COMP:18582"/>
        <dbReference type="ChEBI" id="CHEBI:15378"/>
        <dbReference type="ChEBI" id="CHEBI:16708"/>
        <dbReference type="ChEBI" id="CHEBI:57844"/>
        <dbReference type="ChEBI" id="CHEBI:59789"/>
        <dbReference type="ChEBI" id="CHEBI:82833"/>
        <dbReference type="ChEBI" id="CHEBI:194443"/>
        <dbReference type="EC" id="2.4.99.17"/>
    </reaction>
</comment>
<comment type="pathway">
    <text evidence="1">tRNA modification; tRNA-queuosine biosynthesis.</text>
</comment>
<comment type="subunit">
    <text evidence="1">Monomer.</text>
</comment>
<comment type="subcellular location">
    <subcellularLocation>
        <location evidence="1">Cytoplasm</location>
    </subcellularLocation>
</comment>
<comment type="similarity">
    <text evidence="1">Belongs to the QueA family.</text>
</comment>
<evidence type="ECO:0000255" key="1">
    <source>
        <dbReference type="HAMAP-Rule" id="MF_00113"/>
    </source>
</evidence>